<accession>Q31WU2</accession>
<reference key="1">
    <citation type="journal article" date="2005" name="Nucleic Acids Res.">
        <title>Genome dynamics and diversity of Shigella species, the etiologic agents of bacillary dysentery.</title>
        <authorList>
            <person name="Yang F."/>
            <person name="Yang J."/>
            <person name="Zhang X."/>
            <person name="Chen L."/>
            <person name="Jiang Y."/>
            <person name="Yan Y."/>
            <person name="Tang X."/>
            <person name="Wang J."/>
            <person name="Xiong Z."/>
            <person name="Dong J."/>
            <person name="Xue Y."/>
            <person name="Zhu Y."/>
            <person name="Xu X."/>
            <person name="Sun L."/>
            <person name="Chen S."/>
            <person name="Nie H."/>
            <person name="Peng J."/>
            <person name="Xu J."/>
            <person name="Wang Y."/>
            <person name="Yuan Z."/>
            <person name="Wen Y."/>
            <person name="Yao Z."/>
            <person name="Shen Y."/>
            <person name="Qiang B."/>
            <person name="Hou Y."/>
            <person name="Yu J."/>
            <person name="Jin Q."/>
        </authorList>
    </citation>
    <scope>NUCLEOTIDE SEQUENCE [LARGE SCALE GENOMIC DNA]</scope>
    <source>
        <strain>Sb227</strain>
    </source>
</reference>
<dbReference type="EC" id="5.3.1.12" evidence="1"/>
<dbReference type="EMBL" id="CP000036">
    <property type="protein sequence ID" value="ABB67466.1"/>
    <property type="molecule type" value="Genomic_DNA"/>
</dbReference>
<dbReference type="RefSeq" id="WP_000187442.1">
    <property type="nucleotide sequence ID" value="NC_007613.1"/>
</dbReference>
<dbReference type="SMR" id="Q31WU2"/>
<dbReference type="GeneID" id="93778895"/>
<dbReference type="KEGG" id="sbo:SBO_2953"/>
<dbReference type="HOGENOM" id="CLU_044465_1_0_6"/>
<dbReference type="UniPathway" id="UPA00246"/>
<dbReference type="Proteomes" id="UP000007067">
    <property type="component" value="Chromosome"/>
</dbReference>
<dbReference type="GO" id="GO:0008880">
    <property type="term" value="F:glucuronate isomerase activity"/>
    <property type="evidence" value="ECO:0007669"/>
    <property type="project" value="UniProtKB-UniRule"/>
</dbReference>
<dbReference type="GO" id="GO:0019698">
    <property type="term" value="P:D-galacturonate catabolic process"/>
    <property type="evidence" value="ECO:0007669"/>
    <property type="project" value="TreeGrafter"/>
</dbReference>
<dbReference type="GO" id="GO:0042840">
    <property type="term" value="P:D-glucuronate catabolic process"/>
    <property type="evidence" value="ECO:0007669"/>
    <property type="project" value="TreeGrafter"/>
</dbReference>
<dbReference type="FunFam" id="1.10.2020.10:FF:000001">
    <property type="entry name" value="Uronate isomerase"/>
    <property type="match status" value="1"/>
</dbReference>
<dbReference type="Gene3D" id="3.20.20.140">
    <property type="entry name" value="Metal-dependent hydrolases"/>
    <property type="match status" value="1"/>
</dbReference>
<dbReference type="Gene3D" id="1.10.2020.10">
    <property type="entry name" value="uronate isomerase, domain 2, chain A"/>
    <property type="match status" value="1"/>
</dbReference>
<dbReference type="HAMAP" id="MF_00675">
    <property type="entry name" value="UxaC"/>
    <property type="match status" value="1"/>
</dbReference>
<dbReference type="InterPro" id="IPR032466">
    <property type="entry name" value="Metal_Hydrolase"/>
</dbReference>
<dbReference type="InterPro" id="IPR003766">
    <property type="entry name" value="Uronate_isomerase"/>
</dbReference>
<dbReference type="NCBIfam" id="NF002794">
    <property type="entry name" value="PRK02925.1"/>
    <property type="match status" value="1"/>
</dbReference>
<dbReference type="PANTHER" id="PTHR30068">
    <property type="entry name" value="URONATE ISOMERASE"/>
    <property type="match status" value="1"/>
</dbReference>
<dbReference type="PANTHER" id="PTHR30068:SF4">
    <property type="entry name" value="URONATE ISOMERASE"/>
    <property type="match status" value="1"/>
</dbReference>
<dbReference type="Pfam" id="PF02614">
    <property type="entry name" value="UxaC"/>
    <property type="match status" value="1"/>
</dbReference>
<dbReference type="SUPFAM" id="SSF51556">
    <property type="entry name" value="Metallo-dependent hydrolases"/>
    <property type="match status" value="1"/>
</dbReference>
<organism>
    <name type="scientific">Shigella boydii serotype 4 (strain Sb227)</name>
    <dbReference type="NCBI Taxonomy" id="300268"/>
    <lineage>
        <taxon>Bacteria</taxon>
        <taxon>Pseudomonadati</taxon>
        <taxon>Pseudomonadota</taxon>
        <taxon>Gammaproteobacteria</taxon>
        <taxon>Enterobacterales</taxon>
        <taxon>Enterobacteriaceae</taxon>
        <taxon>Shigella</taxon>
    </lineage>
</organism>
<feature type="chain" id="PRO_1000044774" description="Uronate isomerase">
    <location>
        <begin position="1"/>
        <end position="470"/>
    </location>
</feature>
<sequence>MTPFMTEDFLLDTEFARRLYHDYAKDQPIFDYHCHLPPQQIAEDYRFKNLYDIWLKGDHYKWRAMRTNGVAERLCTGDASDREKFDAWAATVPHTIGNPLYHWTHLELRRPFGITGKLLSPSTADEIWNECNELLAQDNFSARGIMQQMNVKMVGTTDDPIDSLEHHAEIAKDGSFTIKVLPSWRPDKAFNIEQATFNDYMAKLGEVSDTDIRRFADLQTALTKRLDHFAAHGCKVSDHALDVVMFAEANEAELDSILARRLAGETLSEHEVAQFKTAVLVFLGAEYARRGWVQQYHIGALRNNNLRQFKLLGPDVGFDSINDRPMAEELSKLLSKQNEENLLPKTILYCLNPRDNEVLGTMIGNFQGEGMPGKMQFGSGWWFNDQKDGMERQMTQLAQLGLLSRFVGMLTDSRSFLSYTRHEYFRRILCQMIGRWVEAGEAPADINLLGEMVKNICFNNARDYFAIELN</sequence>
<keyword id="KW-0413">Isomerase</keyword>
<name>UXAC_SHIBS</name>
<evidence type="ECO:0000255" key="1">
    <source>
        <dbReference type="HAMAP-Rule" id="MF_00675"/>
    </source>
</evidence>
<protein>
    <recommendedName>
        <fullName evidence="1">Uronate isomerase</fullName>
        <ecNumber evidence="1">5.3.1.12</ecNumber>
    </recommendedName>
    <alternativeName>
        <fullName evidence="1">Glucuronate isomerase</fullName>
    </alternativeName>
    <alternativeName>
        <fullName evidence="1">Uronic isomerase</fullName>
    </alternativeName>
</protein>
<comment type="catalytic activity">
    <reaction evidence="1">
        <text>D-glucuronate = D-fructuronate</text>
        <dbReference type="Rhea" id="RHEA:13049"/>
        <dbReference type="ChEBI" id="CHEBI:58720"/>
        <dbReference type="ChEBI" id="CHEBI:59863"/>
        <dbReference type="EC" id="5.3.1.12"/>
    </reaction>
</comment>
<comment type="catalytic activity">
    <reaction evidence="1">
        <text>aldehydo-D-galacturonate = keto-D-tagaturonate</text>
        <dbReference type="Rhea" id="RHEA:27702"/>
        <dbReference type="ChEBI" id="CHEBI:12952"/>
        <dbReference type="ChEBI" id="CHEBI:17886"/>
        <dbReference type="EC" id="5.3.1.12"/>
    </reaction>
</comment>
<comment type="pathway">
    <text evidence="1">Carbohydrate metabolism; pentose and glucuronate interconversion.</text>
</comment>
<comment type="similarity">
    <text evidence="1">Belongs to the metallo-dependent hydrolases superfamily. Uronate isomerase family.</text>
</comment>
<gene>
    <name evidence="1" type="primary">uxaC</name>
    <name type="ordered locus">SBO_2953</name>
</gene>
<proteinExistence type="inferred from homology"/>